<organism>
    <name type="scientific">Antithamnion sp.</name>
    <name type="common">Red alga</name>
    <dbReference type="NCBI Taxonomy" id="2767"/>
    <lineage>
        <taxon>Eukaryota</taxon>
        <taxon>Rhodophyta</taxon>
        <taxon>Florideophyceae</taxon>
        <taxon>Rhodymeniophycidae</taxon>
        <taxon>Ceramiales</taxon>
        <taxon>Ceramiaceae</taxon>
        <taxon>Antithamnion</taxon>
    </lineage>
</organism>
<feature type="chain" id="PRO_0000090424" description="Photosystem II protein D1" evidence="1">
    <location>
        <begin position="1"/>
        <end position="344"/>
    </location>
</feature>
<feature type="propeptide" id="PRO_0000316505" evidence="1">
    <location>
        <begin position="345"/>
        <end position="360"/>
    </location>
</feature>
<feature type="transmembrane region" description="Helical" evidence="1">
    <location>
        <begin position="29"/>
        <end position="46"/>
    </location>
</feature>
<feature type="transmembrane region" description="Helical" evidence="1">
    <location>
        <begin position="118"/>
        <end position="133"/>
    </location>
</feature>
<feature type="transmembrane region" description="Helical" evidence="1">
    <location>
        <begin position="142"/>
        <end position="156"/>
    </location>
</feature>
<feature type="transmembrane region" description="Helical" evidence="1">
    <location>
        <begin position="197"/>
        <end position="218"/>
    </location>
</feature>
<feature type="transmembrane region" description="Helical" evidence="1">
    <location>
        <begin position="274"/>
        <end position="288"/>
    </location>
</feature>
<feature type="binding site" description="axial binding residue" evidence="1">
    <location>
        <position position="118"/>
    </location>
    <ligand>
        <name>chlorophyll a</name>
        <dbReference type="ChEBI" id="CHEBI:58416"/>
        <label>ChlzD1</label>
    </ligand>
    <ligandPart>
        <name>Mg</name>
        <dbReference type="ChEBI" id="CHEBI:25107"/>
    </ligandPart>
</feature>
<feature type="binding site" evidence="1">
    <location>
        <position position="126"/>
    </location>
    <ligand>
        <name>pheophytin a</name>
        <dbReference type="ChEBI" id="CHEBI:136840"/>
        <label>D1</label>
    </ligand>
</feature>
<feature type="binding site" evidence="1">
    <location>
        <position position="170"/>
    </location>
    <ligand>
        <name>[CaMn4O5] cluster</name>
        <dbReference type="ChEBI" id="CHEBI:189552"/>
    </ligand>
</feature>
<feature type="binding site" evidence="1">
    <location>
        <position position="189"/>
    </location>
    <ligand>
        <name>[CaMn4O5] cluster</name>
        <dbReference type="ChEBI" id="CHEBI:189552"/>
    </ligand>
</feature>
<feature type="binding site" description="axial binding residue" evidence="1">
    <location>
        <position position="198"/>
    </location>
    <ligand>
        <name>chlorophyll a</name>
        <dbReference type="ChEBI" id="CHEBI:58416"/>
        <label>PD1</label>
    </ligand>
    <ligandPart>
        <name>Mg</name>
        <dbReference type="ChEBI" id="CHEBI:25107"/>
    </ligandPart>
</feature>
<feature type="binding site" evidence="1">
    <location>
        <position position="215"/>
    </location>
    <ligand>
        <name>a quinone</name>
        <dbReference type="ChEBI" id="CHEBI:132124"/>
        <label>B</label>
    </ligand>
</feature>
<feature type="binding site" evidence="1">
    <location>
        <position position="215"/>
    </location>
    <ligand>
        <name>Fe cation</name>
        <dbReference type="ChEBI" id="CHEBI:24875"/>
        <note>ligand shared with heterodimeric partner</note>
    </ligand>
</feature>
<feature type="binding site" evidence="1">
    <location>
        <begin position="264"/>
        <end position="265"/>
    </location>
    <ligand>
        <name>a quinone</name>
        <dbReference type="ChEBI" id="CHEBI:132124"/>
        <label>B</label>
    </ligand>
</feature>
<feature type="binding site" evidence="1">
    <location>
        <position position="272"/>
    </location>
    <ligand>
        <name>Fe cation</name>
        <dbReference type="ChEBI" id="CHEBI:24875"/>
        <note>ligand shared with heterodimeric partner</note>
    </ligand>
</feature>
<feature type="binding site" evidence="1">
    <location>
        <position position="332"/>
    </location>
    <ligand>
        <name>[CaMn4O5] cluster</name>
        <dbReference type="ChEBI" id="CHEBI:189552"/>
    </ligand>
</feature>
<feature type="binding site" evidence="1">
    <location>
        <position position="333"/>
    </location>
    <ligand>
        <name>[CaMn4O5] cluster</name>
        <dbReference type="ChEBI" id="CHEBI:189552"/>
    </ligand>
</feature>
<feature type="binding site" evidence="1">
    <location>
        <position position="342"/>
    </location>
    <ligand>
        <name>[CaMn4O5] cluster</name>
        <dbReference type="ChEBI" id="CHEBI:189552"/>
    </ligand>
</feature>
<feature type="binding site" evidence="1">
    <location>
        <position position="344"/>
    </location>
    <ligand>
        <name>[CaMn4O5] cluster</name>
        <dbReference type="ChEBI" id="CHEBI:189552"/>
    </ligand>
</feature>
<feature type="site" description="Tyrosine radical intermediate" evidence="1">
    <location>
        <position position="161"/>
    </location>
</feature>
<feature type="site" description="Stabilizes free radical intermediate" evidence="1">
    <location>
        <position position="190"/>
    </location>
</feature>
<feature type="site" description="Cleavage; by CTPA" evidence="1">
    <location>
        <begin position="344"/>
        <end position="345"/>
    </location>
</feature>
<accession>P24625</accession>
<gene>
    <name evidence="1" type="primary">psbA</name>
</gene>
<reference key="1">
    <citation type="journal article" date="1991" name="Curr. Genet.">
        <title>Structural similarities between psbA genes from red and brown algae.</title>
        <authorList>
            <person name="Winhauer T."/>
            <person name="Jaeger S."/>
            <person name="Valentin K.-U."/>
            <person name="Zetsche K."/>
        </authorList>
    </citation>
    <scope>NUCLEOTIDE SEQUENCE [GENOMIC DNA]</scope>
    <source>
        <strain>LB 95.79</strain>
    </source>
</reference>
<proteinExistence type="inferred from homology"/>
<sequence length="360" mass="39681">MTATLERRESASLWARFCTWITMNENRLYIGWFGVVMIPTLLTATSVFIIACFAAPPVDIDGIREPVAGSLLYGNNIISGAIIPSSAAIGIHFYPIWEAASLDEWLYNGGPYQLIVLHFLLGVCCYIGREWEFSYRLGMRPWISVAFTAPVVAASAVFLVYPIGQGSFSDGMPLGISGTFNFMLVFQAEHNILMHPLHQLGVAGVFGGSLFSAMHGSLVTSSLIRETTENESANNGYKFGQEEETYNIVAAHGYFGRLIFQYASFNNSRSLHFFLGLWPVVGIWFTSMSVSTMAFNLNGFNFNQSVVDSQGRVINTWADILNRANLGMEVMHERNAHNFPLDLASNESLPLALVAPAING</sequence>
<keyword id="KW-0106">Calcium</keyword>
<keyword id="KW-0148">Chlorophyll</keyword>
<keyword id="KW-0150">Chloroplast</keyword>
<keyword id="KW-0157">Chromophore</keyword>
<keyword id="KW-0249">Electron transport</keyword>
<keyword id="KW-0359">Herbicide resistance</keyword>
<keyword id="KW-0408">Iron</keyword>
<keyword id="KW-0460">Magnesium</keyword>
<keyword id="KW-0464">Manganese</keyword>
<keyword id="KW-0472">Membrane</keyword>
<keyword id="KW-0479">Metal-binding</keyword>
<keyword id="KW-0560">Oxidoreductase</keyword>
<keyword id="KW-0602">Photosynthesis</keyword>
<keyword id="KW-0604">Photosystem II</keyword>
<keyword id="KW-0934">Plastid</keyword>
<keyword id="KW-0793">Thylakoid</keyword>
<keyword id="KW-0812">Transmembrane</keyword>
<keyword id="KW-1133">Transmembrane helix</keyword>
<keyword id="KW-0813">Transport</keyword>
<comment type="function">
    <text evidence="1">Photosystem II (PSII) is a light-driven water:plastoquinone oxidoreductase that uses light energy to abstract electrons from H(2)O, generating O(2) and a proton gradient subsequently used for ATP formation. It consists of a core antenna complex that captures photons, and an electron transfer chain that converts photonic excitation into a charge separation. The D1/D2 (PsbA/PsbD) reaction center heterodimer binds P680, the primary electron donor of PSII as well as several subsequent electron acceptors.</text>
</comment>
<comment type="catalytic activity">
    <reaction evidence="1">
        <text>2 a plastoquinone + 4 hnu + 2 H2O = 2 a plastoquinol + O2</text>
        <dbReference type="Rhea" id="RHEA:36359"/>
        <dbReference type="Rhea" id="RHEA-COMP:9561"/>
        <dbReference type="Rhea" id="RHEA-COMP:9562"/>
        <dbReference type="ChEBI" id="CHEBI:15377"/>
        <dbReference type="ChEBI" id="CHEBI:15379"/>
        <dbReference type="ChEBI" id="CHEBI:17757"/>
        <dbReference type="ChEBI" id="CHEBI:30212"/>
        <dbReference type="ChEBI" id="CHEBI:62192"/>
        <dbReference type="EC" id="1.10.3.9"/>
    </reaction>
</comment>
<comment type="cofactor">
    <text evidence="1">The D1/D2 heterodimer binds P680, chlorophylls that are the primary electron donor of PSII, and subsequent electron acceptors. It shares a non-heme iron and each subunit binds pheophytin, quinone, additional chlorophylls, carotenoids and lipids. D1 provides most of the ligands for the Mn4-Ca-O5 cluster of the oxygen-evolving complex (OEC). There is also a Cl(-1) ion associated with D1 and D2, which is required for oxygen evolution. The PSII complex binds additional chlorophylls, carotenoids and specific lipids.</text>
</comment>
<comment type="subunit">
    <text evidence="1">PSII is composed of 1 copy each of membrane proteins PsbA, PsbB, PsbC, PsbD, PsbE, PsbF, PsbH, PsbI, PsbJ, PsbK, PsbL, PsbM, PsbT, PsbX, PsbY, PsbZ, Psb30/Ycf12, at least 3 peripheral proteins of the oxygen-evolving complex and a large number of cofactors. It forms dimeric complexes.</text>
</comment>
<comment type="subcellular location">
    <subcellularLocation>
        <location evidence="1">Plastid</location>
        <location evidence="1">Chloroplast thylakoid membrane</location>
        <topology evidence="1">Multi-pass membrane protein</topology>
    </subcellularLocation>
</comment>
<comment type="PTM">
    <text evidence="1">Tyr-161 forms a radical intermediate that is referred to as redox-active TyrZ, YZ or Y-Z.</text>
</comment>
<comment type="PTM">
    <text evidence="1">C-terminally processed by CTPA; processing is essential to allow assembly of the oxygen-evolving complex and thus photosynthetic growth.</text>
</comment>
<comment type="miscellaneous">
    <text evidence="1">2 of the reaction center chlorophylls (ChlD1 and ChlD2) are entirely coordinated by water.</text>
</comment>
<comment type="miscellaneous">
    <text evidence="1">Herbicides such as atrazine, BNT, diuron or ioxynil bind in the Q(B) binding site and block subsequent electron transfer.</text>
</comment>
<comment type="similarity">
    <text evidence="1">Belongs to the reaction center PufL/M/PsbA/D family.</text>
</comment>
<dbReference type="EC" id="1.10.3.9" evidence="1"/>
<dbReference type="EMBL" id="X55364">
    <property type="protein sequence ID" value="CAA39049.1"/>
    <property type="molecule type" value="Genomic_DNA"/>
</dbReference>
<dbReference type="PIR" id="S32577">
    <property type="entry name" value="S32577"/>
</dbReference>
<dbReference type="SMR" id="P24625"/>
<dbReference type="GO" id="GO:0009535">
    <property type="term" value="C:chloroplast thylakoid membrane"/>
    <property type="evidence" value="ECO:0007669"/>
    <property type="project" value="UniProtKB-SubCell"/>
</dbReference>
<dbReference type="GO" id="GO:0009523">
    <property type="term" value="C:photosystem II"/>
    <property type="evidence" value="ECO:0007669"/>
    <property type="project" value="UniProtKB-KW"/>
</dbReference>
<dbReference type="GO" id="GO:0016168">
    <property type="term" value="F:chlorophyll binding"/>
    <property type="evidence" value="ECO:0007669"/>
    <property type="project" value="UniProtKB-UniRule"/>
</dbReference>
<dbReference type="GO" id="GO:0045156">
    <property type="term" value="F:electron transporter, transferring electrons within the cyclic electron transport pathway of photosynthesis activity"/>
    <property type="evidence" value="ECO:0007669"/>
    <property type="project" value="InterPro"/>
</dbReference>
<dbReference type="GO" id="GO:0005506">
    <property type="term" value="F:iron ion binding"/>
    <property type="evidence" value="ECO:0007669"/>
    <property type="project" value="UniProtKB-UniRule"/>
</dbReference>
<dbReference type="GO" id="GO:0016682">
    <property type="term" value="F:oxidoreductase activity, acting on diphenols and related substances as donors, oxygen as acceptor"/>
    <property type="evidence" value="ECO:0007669"/>
    <property type="project" value="UniProtKB-UniRule"/>
</dbReference>
<dbReference type="GO" id="GO:0009772">
    <property type="term" value="P:photosynthetic electron transport in photosystem II"/>
    <property type="evidence" value="ECO:0007669"/>
    <property type="project" value="InterPro"/>
</dbReference>
<dbReference type="GO" id="GO:0009635">
    <property type="term" value="P:response to herbicide"/>
    <property type="evidence" value="ECO:0007669"/>
    <property type="project" value="UniProtKB-KW"/>
</dbReference>
<dbReference type="CDD" id="cd09289">
    <property type="entry name" value="Photosystem-II_D1"/>
    <property type="match status" value="1"/>
</dbReference>
<dbReference type="FunFam" id="1.20.85.10:FF:000002">
    <property type="entry name" value="Photosystem II protein D1"/>
    <property type="match status" value="1"/>
</dbReference>
<dbReference type="Gene3D" id="1.20.85.10">
    <property type="entry name" value="Photosystem II protein D1-like"/>
    <property type="match status" value="1"/>
</dbReference>
<dbReference type="HAMAP" id="MF_01379">
    <property type="entry name" value="PSII_PsbA_D1"/>
    <property type="match status" value="1"/>
</dbReference>
<dbReference type="InterPro" id="IPR055266">
    <property type="entry name" value="D1/D2"/>
</dbReference>
<dbReference type="InterPro" id="IPR036854">
    <property type="entry name" value="Photo_II_D1/D2_sf"/>
</dbReference>
<dbReference type="InterPro" id="IPR000484">
    <property type="entry name" value="Photo_RC_L/M"/>
</dbReference>
<dbReference type="InterPro" id="IPR055265">
    <property type="entry name" value="Photo_RC_L/M_CS"/>
</dbReference>
<dbReference type="InterPro" id="IPR005867">
    <property type="entry name" value="PSII_D1"/>
</dbReference>
<dbReference type="NCBIfam" id="TIGR01151">
    <property type="entry name" value="psbA"/>
    <property type="match status" value="1"/>
</dbReference>
<dbReference type="PANTHER" id="PTHR33149:SF12">
    <property type="entry name" value="PHOTOSYSTEM II D2 PROTEIN"/>
    <property type="match status" value="1"/>
</dbReference>
<dbReference type="PANTHER" id="PTHR33149">
    <property type="entry name" value="PHOTOSYSTEM II PROTEIN D1"/>
    <property type="match status" value="1"/>
</dbReference>
<dbReference type="Pfam" id="PF00124">
    <property type="entry name" value="Photo_RC"/>
    <property type="match status" value="1"/>
</dbReference>
<dbReference type="PRINTS" id="PR00256">
    <property type="entry name" value="REACTNCENTRE"/>
</dbReference>
<dbReference type="SUPFAM" id="SSF81483">
    <property type="entry name" value="Bacterial photosystem II reaction centre, L and M subunits"/>
    <property type="match status" value="1"/>
</dbReference>
<dbReference type="PROSITE" id="PS00244">
    <property type="entry name" value="REACTION_CENTER"/>
    <property type="match status" value="1"/>
</dbReference>
<protein>
    <recommendedName>
        <fullName evidence="1">Photosystem II protein D1</fullName>
        <shortName evidence="1">PSII D1 protein</shortName>
        <ecNumber evidence="1">1.10.3.9</ecNumber>
    </recommendedName>
    <alternativeName>
        <fullName evidence="1">Photosystem II Q(B) protein</fullName>
    </alternativeName>
</protein>
<name>PSBA_ANTSP</name>
<evidence type="ECO:0000255" key="1">
    <source>
        <dbReference type="HAMAP-Rule" id="MF_01379"/>
    </source>
</evidence>
<geneLocation type="chloroplast"/>